<protein>
    <recommendedName>
        <fullName>Antigenic heat-stable 120 kDa protein</fullName>
    </recommendedName>
    <alternativeName>
        <fullName>120 kDa antigen</fullName>
    </alternativeName>
    <alternativeName>
        <fullName>Protein PS 120</fullName>
        <shortName>PS120</shortName>
    </alternativeName>
</protein>
<sequence length="1028" mass="112382">MRGFMSKDGNLDTSEFDTLANKEYTAEQKQTLEQGQKEFLSQTTTPELEADDGFIVTSASFAQSTPSMSALSGNISPDSQTSDPITKAVRETIIQPQKDNLIEQILKDLAALTDRDLAEQKRKEIEEEKEKDKTLSTFFGNPANREFIDKALDNPELKKKLESIEIAGYKNVHNTFSAASGYPGGFKPVQWENHVSASDLRATVVKNDAGDELCTLNETTVKTKPFTLAKQDGTQVQISSYREIDFPIKLDKADGSMHLSMVALKADGTKPSKDKAVYFTAHYEEGPNGKPQLKEISSPKPLKFAGTGDDAIAYIEHGGEIYTLAVTRGKYKEMMKEVELNQGQSVDLSQAEDIIIGQGQSKEQPLITPQQTTSSSVEPPQYKQQVPPITPTNQPLQPETSQMQQSQQVTPNLLNTATALSGSMQDLLNYVNAGLTKEIDSNKQIDLIKEAATAILNNEKSDIAEKQANIIALAENTVNNKNLKPDAKVAGVNAILETIKNDQNTPNLEKSKMLEATVAIVLNSENLESKQKQQMLEKAVDVGLSLKDDASRAATIDGIKDVVIKSNLSTEDKGTMLIAVGDKVNVSELSNAEKQKLLGSVLKKDVEAQVLSPAQQQLMQQHLDKITAEQTKKDTIKKVNDILFDPLSNTELKTTNIQAITSNVLDGPATAEVKGEIIQEITNTVAGSSLEAQDKAAIIKGVGETIATHSDTSLSLPNKALIMASAEKGIAESQTNLPDRELMTKGLVDGIYEGKGGPEITKAVSSGIDNSNINDSEKEALKKAKDAASEAALDRDTQNLTEGLKGQNIEEHKPHDDIYNKAREVINAVNPVIEALEKSKEPVVSAEDRIVQETSSILNNISKLAVEKVNNLRAMLSPNGNLKTLEEKKEESIKKVDELVKAFGTKSSTEEQQSFIKTNLIDDKTLSKEVRLQTIDKLLQEQKRAEAIENPSVKTEDVRVVSGKSKLKPISKDNPDIEKAKMVVGRDRVNIKGNIKIMGALMNARDIIQSENLNKSIPIKRESSPPQR</sequence>
<organism>
    <name type="scientific">Rickettsia africae</name>
    <dbReference type="NCBI Taxonomy" id="35788"/>
    <lineage>
        <taxon>Bacteria</taxon>
        <taxon>Pseudomonadati</taxon>
        <taxon>Pseudomonadota</taxon>
        <taxon>Alphaproteobacteria</taxon>
        <taxon>Rickettsiales</taxon>
        <taxon>Rickettsiaceae</taxon>
        <taxon>Rickettsieae</taxon>
        <taxon>Rickettsia</taxon>
        <taxon>spotted fever group</taxon>
    </lineage>
</organism>
<proteinExistence type="predicted"/>
<accession>Q9AJ83</accession>
<comment type="subcellular location">
    <subcellularLocation>
        <location evidence="2">Cytoplasm</location>
    </subcellularLocation>
</comment>
<dbReference type="EMBL" id="AF151724">
    <property type="protein sequence ID" value="AAK30682.2"/>
    <property type="molecule type" value="Genomic_DNA"/>
</dbReference>
<dbReference type="SMR" id="Q9AJ83"/>
<dbReference type="OMA" id="TAHYEEG"/>
<dbReference type="GO" id="GO:0005737">
    <property type="term" value="C:cytoplasm"/>
    <property type="evidence" value="ECO:0007669"/>
    <property type="project" value="UniProtKB-SubCell"/>
</dbReference>
<dbReference type="InterPro" id="IPR020954">
    <property type="entry name" value="Rickettsia_antigen_120kDa"/>
</dbReference>
<dbReference type="NCBIfam" id="NF038365">
    <property type="entry name" value="Sca4_fam"/>
    <property type="match status" value="1"/>
</dbReference>
<dbReference type="Pfam" id="PF12574">
    <property type="entry name" value="120_Rick_ant"/>
    <property type="match status" value="1"/>
</dbReference>
<reference key="1">
    <citation type="journal article" date="2001" name="Int. J. Syst. Evol. Microbiol.">
        <title>Phylogeny of Rickettsia spp. inferred by comparing sequences of 'gene D', which encodes an intracytoplasmic protein.</title>
        <authorList>
            <person name="Sekeyova Z."/>
            <person name="Roux V."/>
            <person name="Raoult D."/>
        </authorList>
    </citation>
    <scope>NUCLEOTIDE SEQUENCE [GENOMIC DNA]</scope>
</reference>
<gene>
    <name type="primary">sca4</name>
    <name type="synonym">D</name>
</gene>
<keyword id="KW-0963">Cytoplasm</keyword>
<name>SCA4_RICAF</name>
<feature type="chain" id="PRO_0000097607" description="Antigenic heat-stable 120 kDa protein">
    <location>
        <begin position="1"/>
        <end position="1028" status="greater than"/>
    </location>
</feature>
<feature type="region of interest" description="Disordered" evidence="1">
    <location>
        <begin position="359"/>
        <end position="405"/>
    </location>
</feature>
<feature type="compositionally biased region" description="Polar residues" evidence="1">
    <location>
        <begin position="359"/>
        <end position="384"/>
    </location>
</feature>
<feature type="compositionally biased region" description="Polar residues" evidence="1">
    <location>
        <begin position="391"/>
        <end position="400"/>
    </location>
</feature>
<feature type="non-terminal residue">
    <location>
        <position position="1028"/>
    </location>
</feature>
<evidence type="ECO:0000256" key="1">
    <source>
        <dbReference type="SAM" id="MobiDB-lite"/>
    </source>
</evidence>
<evidence type="ECO:0000305" key="2"/>